<gene>
    <name type="primary">GAT2</name>
    <name type="ordered locus">YMR136W</name>
    <name type="ORF">YM9375.05</name>
</gene>
<dbReference type="EMBL" id="Z47071">
    <property type="protein sequence ID" value="CAA87350.1"/>
    <property type="molecule type" value="Genomic_DNA"/>
</dbReference>
<dbReference type="EMBL" id="BK006946">
    <property type="protein sequence ID" value="DAA10033.1"/>
    <property type="molecule type" value="Genomic_DNA"/>
</dbReference>
<dbReference type="PIR" id="S50392">
    <property type="entry name" value="S50392"/>
</dbReference>
<dbReference type="RefSeq" id="NP_013856.1">
    <property type="nucleotide sequence ID" value="NM_001182638.1"/>
</dbReference>
<dbReference type="SMR" id="P40209"/>
<dbReference type="BioGRID" id="35313">
    <property type="interactions" value="84"/>
</dbReference>
<dbReference type="FunCoup" id="P40209">
    <property type="interactions" value="89"/>
</dbReference>
<dbReference type="IntAct" id="P40209">
    <property type="interactions" value="4"/>
</dbReference>
<dbReference type="MINT" id="P40209"/>
<dbReference type="STRING" id="4932.YMR136W"/>
<dbReference type="GlyGen" id="P40209">
    <property type="glycosylation" value="1 site"/>
</dbReference>
<dbReference type="iPTMnet" id="P40209"/>
<dbReference type="PaxDb" id="4932-YMR136W"/>
<dbReference type="PeptideAtlas" id="P40209"/>
<dbReference type="EnsemblFungi" id="YMR136W_mRNA">
    <property type="protein sequence ID" value="YMR136W"/>
    <property type="gene ID" value="YMR136W"/>
</dbReference>
<dbReference type="GeneID" id="855167"/>
<dbReference type="KEGG" id="sce:YMR136W"/>
<dbReference type="AGR" id="SGD:S000004744"/>
<dbReference type="SGD" id="S000004744">
    <property type="gene designation" value="GAT2"/>
</dbReference>
<dbReference type="VEuPathDB" id="FungiDB:YMR136W"/>
<dbReference type="eggNOG" id="KOG1601">
    <property type="taxonomic scope" value="Eukaryota"/>
</dbReference>
<dbReference type="HOGENOM" id="CLU_035174_0_0_1"/>
<dbReference type="InParanoid" id="P40209"/>
<dbReference type="OMA" id="RSCHEIN"/>
<dbReference type="OrthoDB" id="2162994at2759"/>
<dbReference type="BioCyc" id="YEAST:G3O-32829-MONOMER"/>
<dbReference type="BioGRID-ORCS" id="855167">
    <property type="hits" value="1 hit in 10 CRISPR screens"/>
</dbReference>
<dbReference type="PRO" id="PR:P40209"/>
<dbReference type="Proteomes" id="UP000002311">
    <property type="component" value="Chromosome XIII"/>
</dbReference>
<dbReference type="RNAct" id="P40209">
    <property type="molecule type" value="protein"/>
</dbReference>
<dbReference type="GO" id="GO:0005634">
    <property type="term" value="C:nucleus"/>
    <property type="evidence" value="ECO:0000318"/>
    <property type="project" value="GO_Central"/>
</dbReference>
<dbReference type="GO" id="GO:0000981">
    <property type="term" value="F:DNA-binding transcription factor activity, RNA polymerase II-specific"/>
    <property type="evidence" value="ECO:0000247"/>
    <property type="project" value="SGD"/>
</dbReference>
<dbReference type="GO" id="GO:0000976">
    <property type="term" value="F:transcription cis-regulatory region binding"/>
    <property type="evidence" value="ECO:0000318"/>
    <property type="project" value="GO_Central"/>
</dbReference>
<dbReference type="GO" id="GO:0008270">
    <property type="term" value="F:zinc ion binding"/>
    <property type="evidence" value="ECO:0007669"/>
    <property type="project" value="UniProtKB-KW"/>
</dbReference>
<dbReference type="GO" id="GO:0006357">
    <property type="term" value="P:regulation of transcription by RNA polymerase II"/>
    <property type="evidence" value="ECO:0000247"/>
    <property type="project" value="SGD"/>
</dbReference>
<dbReference type="CDD" id="cd00202">
    <property type="entry name" value="ZnF_GATA"/>
    <property type="match status" value="1"/>
</dbReference>
<dbReference type="Gene3D" id="3.30.50.10">
    <property type="entry name" value="Erythroid Transcription Factor GATA-1, subunit A"/>
    <property type="match status" value="1"/>
</dbReference>
<dbReference type="InterPro" id="IPR051140">
    <property type="entry name" value="GATA_TF"/>
</dbReference>
<dbReference type="InterPro" id="IPR000679">
    <property type="entry name" value="Znf_GATA"/>
</dbReference>
<dbReference type="InterPro" id="IPR013088">
    <property type="entry name" value="Znf_NHR/GATA"/>
</dbReference>
<dbReference type="PANTHER" id="PTHR45658">
    <property type="entry name" value="GATA TRANSCRIPTION FACTOR"/>
    <property type="match status" value="1"/>
</dbReference>
<dbReference type="PANTHER" id="PTHR45658:SF18">
    <property type="entry name" value="PROTEIN GAT2"/>
    <property type="match status" value="1"/>
</dbReference>
<dbReference type="Pfam" id="PF00320">
    <property type="entry name" value="GATA"/>
    <property type="match status" value="1"/>
</dbReference>
<dbReference type="SMART" id="SM00401">
    <property type="entry name" value="ZnF_GATA"/>
    <property type="match status" value="1"/>
</dbReference>
<dbReference type="SUPFAM" id="SSF57716">
    <property type="entry name" value="Glucocorticoid receptor-like (DNA-binding domain)"/>
    <property type="match status" value="1"/>
</dbReference>
<dbReference type="PROSITE" id="PS00344">
    <property type="entry name" value="GATA_ZN_FINGER_1"/>
    <property type="match status" value="1"/>
</dbReference>
<dbReference type="PROSITE" id="PS50114">
    <property type="entry name" value="GATA_ZN_FINGER_2"/>
    <property type="match status" value="1"/>
</dbReference>
<accession>P40209</accession>
<accession>D6VZV9</accession>
<sequence>MQAPNIYPFSQTQPQALPGFTYGPPQLVFDHSAPRVDPLHSTVTINSPLPLQHYNGPNAHINSANNNYAYYYHHPNNNDNNNHSNNTIKNNNINSVLPAVNIQISNNSHYRNTHQIPSAPQRLVSIIPDPHMPPNISHFQLNNIHPQMHAPVATDIHFQQVPVYNKTNNGIGTDNINNDKPVNSNQNEVLDNIDERSCHEINRVVSFSKHFENNELTTTANDLNIQSTMDELAKLKSLSNSTHFRQSIATQNFHSLQNHITTIENRLASLLTDRQQEQQQLKQQESEKESSSPFSNKIKLPSLQELTDSISTQHLPTFYDNKRHASDTDLKSSTLHGPLYHRHAFLSTSSSSPSPTAGSAPLQKLQVPRQDDPNDKKMNISSSPFNSITYIPNTTLSPMVQTQLKNLTTSNLNTKKKNNRGRPRAIQRQPTLTTSSHFINNSNPGAAAVSTTTPAANSDEKNPNAKKIIEFCFHCGETETPEWRKGPYGTRTLCNACGLFYRKVTKKFGSKSSNLLLRYRRSIDLANDRRIPDFITIPNRFIHDMDNDQTLDSEYNTILQ</sequence>
<proteinExistence type="predicted"/>
<name>GAT2_YEAST</name>
<protein>
    <recommendedName>
        <fullName>Protein GAT2</fullName>
    </recommendedName>
</protein>
<feature type="chain" id="PRO_0000083485" description="Protein GAT2">
    <location>
        <begin position="1"/>
        <end position="560"/>
    </location>
</feature>
<feature type="zinc finger region" description="GATA-type" evidence="1">
    <location>
        <begin position="472"/>
        <end position="497"/>
    </location>
</feature>
<feature type="region of interest" description="Disordered" evidence="2">
    <location>
        <begin position="274"/>
        <end position="297"/>
    </location>
</feature>
<feature type="region of interest" description="Disordered" evidence="2">
    <location>
        <begin position="345"/>
        <end position="383"/>
    </location>
</feature>
<feature type="region of interest" description="Disordered" evidence="2">
    <location>
        <begin position="412"/>
        <end position="461"/>
    </location>
</feature>
<feature type="compositionally biased region" description="Low complexity" evidence="2">
    <location>
        <begin position="347"/>
        <end position="361"/>
    </location>
</feature>
<feature type="compositionally biased region" description="Basic and acidic residues" evidence="2">
    <location>
        <begin position="369"/>
        <end position="378"/>
    </location>
</feature>
<feature type="compositionally biased region" description="Basic residues" evidence="2">
    <location>
        <begin position="414"/>
        <end position="425"/>
    </location>
</feature>
<feature type="compositionally biased region" description="Polar residues" evidence="2">
    <location>
        <begin position="428"/>
        <end position="456"/>
    </location>
</feature>
<reference key="1">
    <citation type="journal article" date="1997" name="Nature">
        <title>The nucleotide sequence of Saccharomyces cerevisiae chromosome XIII.</title>
        <authorList>
            <person name="Bowman S."/>
            <person name="Churcher C.M."/>
            <person name="Badcock K."/>
            <person name="Brown D."/>
            <person name="Chillingworth T."/>
            <person name="Connor R."/>
            <person name="Dedman K."/>
            <person name="Devlin K."/>
            <person name="Gentles S."/>
            <person name="Hamlin N."/>
            <person name="Hunt S."/>
            <person name="Jagels K."/>
            <person name="Lye G."/>
            <person name="Moule S."/>
            <person name="Odell C."/>
            <person name="Pearson D."/>
            <person name="Rajandream M.A."/>
            <person name="Rice P."/>
            <person name="Skelton J."/>
            <person name="Walsh S.V."/>
            <person name="Whitehead S."/>
            <person name="Barrell B.G."/>
        </authorList>
    </citation>
    <scope>NUCLEOTIDE SEQUENCE [LARGE SCALE GENOMIC DNA]</scope>
    <source>
        <strain>ATCC 204508 / S288c</strain>
    </source>
</reference>
<reference key="2">
    <citation type="journal article" date="2014" name="G3 (Bethesda)">
        <title>The reference genome sequence of Saccharomyces cerevisiae: Then and now.</title>
        <authorList>
            <person name="Engel S.R."/>
            <person name="Dietrich F.S."/>
            <person name="Fisk D.G."/>
            <person name="Binkley G."/>
            <person name="Balakrishnan R."/>
            <person name="Costanzo M.C."/>
            <person name="Dwight S.S."/>
            <person name="Hitz B.C."/>
            <person name="Karra K."/>
            <person name="Nash R.S."/>
            <person name="Weng S."/>
            <person name="Wong E.D."/>
            <person name="Lloyd P."/>
            <person name="Skrzypek M.S."/>
            <person name="Miyasato S.R."/>
            <person name="Simison M."/>
            <person name="Cherry J.M."/>
        </authorList>
    </citation>
    <scope>GENOME REANNOTATION</scope>
    <source>
        <strain>ATCC 204508 / S288c</strain>
    </source>
</reference>
<reference key="3">
    <citation type="journal article" date="1999" name="Yeast">
        <title>Genome-wide transcriptional analysis in S. cerevisiae by mini-array membrane hybridization.</title>
        <authorList>
            <person name="Cox K.H."/>
            <person name="Pinchak A.B."/>
            <person name="Cooper T.G."/>
        </authorList>
    </citation>
    <scope>IDENTIFICATION</scope>
</reference>
<evidence type="ECO:0000255" key="1">
    <source>
        <dbReference type="PROSITE-ProRule" id="PRU00094"/>
    </source>
</evidence>
<evidence type="ECO:0000256" key="2">
    <source>
        <dbReference type="SAM" id="MobiDB-lite"/>
    </source>
</evidence>
<organism>
    <name type="scientific">Saccharomyces cerevisiae (strain ATCC 204508 / S288c)</name>
    <name type="common">Baker's yeast</name>
    <dbReference type="NCBI Taxonomy" id="559292"/>
    <lineage>
        <taxon>Eukaryota</taxon>
        <taxon>Fungi</taxon>
        <taxon>Dikarya</taxon>
        <taxon>Ascomycota</taxon>
        <taxon>Saccharomycotina</taxon>
        <taxon>Saccharomycetes</taxon>
        <taxon>Saccharomycetales</taxon>
        <taxon>Saccharomycetaceae</taxon>
        <taxon>Saccharomyces</taxon>
    </lineage>
</organism>
<keyword id="KW-0238">DNA-binding</keyword>
<keyword id="KW-0479">Metal-binding</keyword>
<keyword id="KW-1185">Reference proteome</keyword>
<keyword id="KW-0862">Zinc</keyword>
<keyword id="KW-0863">Zinc-finger</keyword>